<accession>C1KVE4</accession>
<keyword id="KW-0067">ATP-binding</keyword>
<keyword id="KW-0963">Cytoplasm</keyword>
<keyword id="KW-0418">Kinase</keyword>
<keyword id="KW-0547">Nucleotide-binding</keyword>
<keyword id="KW-0808">Transferase</keyword>
<feature type="chain" id="PRO_1000212000" description="Uridine kinase">
    <location>
        <begin position="1"/>
        <end position="209"/>
    </location>
</feature>
<feature type="binding site" evidence="1">
    <location>
        <begin position="12"/>
        <end position="19"/>
    </location>
    <ligand>
        <name>ATP</name>
        <dbReference type="ChEBI" id="CHEBI:30616"/>
    </ligand>
</feature>
<name>URK_LISMC</name>
<organism>
    <name type="scientific">Listeria monocytogenes serotype 4b (strain CLIP80459)</name>
    <dbReference type="NCBI Taxonomy" id="568819"/>
    <lineage>
        <taxon>Bacteria</taxon>
        <taxon>Bacillati</taxon>
        <taxon>Bacillota</taxon>
        <taxon>Bacilli</taxon>
        <taxon>Bacillales</taxon>
        <taxon>Listeriaceae</taxon>
        <taxon>Listeria</taxon>
    </lineage>
</organism>
<evidence type="ECO:0000255" key="1">
    <source>
        <dbReference type="HAMAP-Rule" id="MF_00551"/>
    </source>
</evidence>
<proteinExistence type="inferred from homology"/>
<comment type="catalytic activity">
    <reaction evidence="1">
        <text>uridine + ATP = UMP + ADP + H(+)</text>
        <dbReference type="Rhea" id="RHEA:16825"/>
        <dbReference type="ChEBI" id="CHEBI:15378"/>
        <dbReference type="ChEBI" id="CHEBI:16704"/>
        <dbReference type="ChEBI" id="CHEBI:30616"/>
        <dbReference type="ChEBI" id="CHEBI:57865"/>
        <dbReference type="ChEBI" id="CHEBI:456216"/>
        <dbReference type="EC" id="2.7.1.48"/>
    </reaction>
</comment>
<comment type="catalytic activity">
    <reaction evidence="1">
        <text>cytidine + ATP = CMP + ADP + H(+)</text>
        <dbReference type="Rhea" id="RHEA:24674"/>
        <dbReference type="ChEBI" id="CHEBI:15378"/>
        <dbReference type="ChEBI" id="CHEBI:17562"/>
        <dbReference type="ChEBI" id="CHEBI:30616"/>
        <dbReference type="ChEBI" id="CHEBI:60377"/>
        <dbReference type="ChEBI" id="CHEBI:456216"/>
        <dbReference type="EC" id="2.7.1.48"/>
    </reaction>
</comment>
<comment type="pathway">
    <text evidence="1">Pyrimidine metabolism; CTP biosynthesis via salvage pathway; CTP from cytidine: step 1/3.</text>
</comment>
<comment type="pathway">
    <text evidence="1">Pyrimidine metabolism; UMP biosynthesis via salvage pathway; UMP from uridine: step 1/1.</text>
</comment>
<comment type="subcellular location">
    <subcellularLocation>
        <location evidence="1">Cytoplasm</location>
    </subcellularLocation>
</comment>
<comment type="similarity">
    <text evidence="1">Belongs to the uridine kinase family.</text>
</comment>
<sequence length="209" mass="24148">MTKKPIVVGVTGGSGSGKTSVTKAICDHFSGHSILMIAQDVYYHDQANISFEDRLKVNYDHPLAFDTDLLISHIAALRRYETIEKPIYDYAKYTRKKEVEIQEPREVIILEGILILEDKRLRDLMDIKVYVDTDDDIRFIRRLLRDMKERGRTMDSVIEQYLSVVKPMHNEFIEPTKKFADIIIPEGGENHVAIDLMTTKIESILQKHV</sequence>
<dbReference type="EC" id="2.7.1.48" evidence="1"/>
<dbReference type="EMBL" id="FM242711">
    <property type="protein sequence ID" value="CAS05269.1"/>
    <property type="molecule type" value="Genomic_DNA"/>
</dbReference>
<dbReference type="RefSeq" id="WP_003725973.1">
    <property type="nucleotide sequence ID" value="NC_012488.1"/>
</dbReference>
<dbReference type="SMR" id="C1KVE4"/>
<dbReference type="KEGG" id="lmc:Lm4b_01507"/>
<dbReference type="HOGENOM" id="CLU_021278_1_2_9"/>
<dbReference type="UniPathway" id="UPA00574">
    <property type="reaction ID" value="UER00637"/>
</dbReference>
<dbReference type="UniPathway" id="UPA00579">
    <property type="reaction ID" value="UER00640"/>
</dbReference>
<dbReference type="GO" id="GO:0005737">
    <property type="term" value="C:cytoplasm"/>
    <property type="evidence" value="ECO:0007669"/>
    <property type="project" value="UniProtKB-SubCell"/>
</dbReference>
<dbReference type="GO" id="GO:0005524">
    <property type="term" value="F:ATP binding"/>
    <property type="evidence" value="ECO:0007669"/>
    <property type="project" value="UniProtKB-UniRule"/>
</dbReference>
<dbReference type="GO" id="GO:0043771">
    <property type="term" value="F:cytidine kinase activity"/>
    <property type="evidence" value="ECO:0007669"/>
    <property type="project" value="RHEA"/>
</dbReference>
<dbReference type="GO" id="GO:0004849">
    <property type="term" value="F:uridine kinase activity"/>
    <property type="evidence" value="ECO:0007669"/>
    <property type="project" value="UniProtKB-UniRule"/>
</dbReference>
<dbReference type="GO" id="GO:0044211">
    <property type="term" value="P:CTP salvage"/>
    <property type="evidence" value="ECO:0007669"/>
    <property type="project" value="UniProtKB-UniRule"/>
</dbReference>
<dbReference type="GO" id="GO:0044206">
    <property type="term" value="P:UMP salvage"/>
    <property type="evidence" value="ECO:0007669"/>
    <property type="project" value="UniProtKB-UniRule"/>
</dbReference>
<dbReference type="CDD" id="cd02023">
    <property type="entry name" value="UMPK"/>
    <property type="match status" value="1"/>
</dbReference>
<dbReference type="Gene3D" id="3.40.50.300">
    <property type="entry name" value="P-loop containing nucleotide triphosphate hydrolases"/>
    <property type="match status" value="1"/>
</dbReference>
<dbReference type="HAMAP" id="MF_00551">
    <property type="entry name" value="Uridine_kinase"/>
    <property type="match status" value="1"/>
</dbReference>
<dbReference type="InterPro" id="IPR027417">
    <property type="entry name" value="P-loop_NTPase"/>
</dbReference>
<dbReference type="InterPro" id="IPR006083">
    <property type="entry name" value="PRK/URK"/>
</dbReference>
<dbReference type="InterPro" id="IPR026008">
    <property type="entry name" value="Uridine_kinase"/>
</dbReference>
<dbReference type="InterPro" id="IPR000764">
    <property type="entry name" value="Uridine_kinase-like"/>
</dbReference>
<dbReference type="NCBIfam" id="NF004018">
    <property type="entry name" value="PRK05480.1"/>
    <property type="match status" value="1"/>
</dbReference>
<dbReference type="NCBIfam" id="TIGR00235">
    <property type="entry name" value="udk"/>
    <property type="match status" value="1"/>
</dbReference>
<dbReference type="PANTHER" id="PTHR10285">
    <property type="entry name" value="URIDINE KINASE"/>
    <property type="match status" value="1"/>
</dbReference>
<dbReference type="Pfam" id="PF00485">
    <property type="entry name" value="PRK"/>
    <property type="match status" value="1"/>
</dbReference>
<dbReference type="PRINTS" id="PR00988">
    <property type="entry name" value="URIDINKINASE"/>
</dbReference>
<dbReference type="SUPFAM" id="SSF52540">
    <property type="entry name" value="P-loop containing nucleoside triphosphate hydrolases"/>
    <property type="match status" value="1"/>
</dbReference>
<gene>
    <name evidence="1" type="primary">udk</name>
    <name type="ordered locus">Lm4b_01507</name>
</gene>
<reference key="1">
    <citation type="journal article" date="2012" name="BMC Genomics">
        <title>Comparative genomics and transcriptomics of lineages I, II, and III strains of Listeria monocytogenes.</title>
        <authorList>
            <person name="Hain T."/>
            <person name="Ghai R."/>
            <person name="Billion A."/>
            <person name="Kuenne C.T."/>
            <person name="Steinweg C."/>
            <person name="Izar B."/>
            <person name="Mohamed W."/>
            <person name="Mraheil M."/>
            <person name="Domann E."/>
            <person name="Schaffrath S."/>
            <person name="Karst U."/>
            <person name="Goesmann A."/>
            <person name="Oehm S."/>
            <person name="Puhler A."/>
            <person name="Merkl R."/>
            <person name="Vorwerk S."/>
            <person name="Glaser P."/>
            <person name="Garrido P."/>
            <person name="Rusniok C."/>
            <person name="Buchrieser C."/>
            <person name="Goebel W."/>
            <person name="Chakraborty T."/>
        </authorList>
    </citation>
    <scope>NUCLEOTIDE SEQUENCE [LARGE SCALE GENOMIC DNA]</scope>
    <source>
        <strain>CLIP80459</strain>
    </source>
</reference>
<protein>
    <recommendedName>
        <fullName evidence="1">Uridine kinase</fullName>
        <ecNumber evidence="1">2.7.1.48</ecNumber>
    </recommendedName>
    <alternativeName>
        <fullName evidence="1">Cytidine monophosphokinase</fullName>
    </alternativeName>
    <alternativeName>
        <fullName evidence="1">Uridine monophosphokinase</fullName>
    </alternativeName>
</protein>